<dbReference type="EC" id="2.4.2.17" evidence="1"/>
<dbReference type="EMBL" id="CP000141">
    <property type="protein sequence ID" value="ABB15831.1"/>
    <property type="molecule type" value="Genomic_DNA"/>
</dbReference>
<dbReference type="RefSeq" id="WP_011344006.1">
    <property type="nucleotide sequence ID" value="NC_007503.1"/>
</dbReference>
<dbReference type="SMR" id="Q3AD54"/>
<dbReference type="FunCoup" id="Q3AD54">
    <property type="interactions" value="365"/>
</dbReference>
<dbReference type="STRING" id="246194.CHY_1084"/>
<dbReference type="KEGG" id="chy:CHY_1084"/>
<dbReference type="eggNOG" id="COG0040">
    <property type="taxonomic scope" value="Bacteria"/>
</dbReference>
<dbReference type="HOGENOM" id="CLU_038115_2_0_9"/>
<dbReference type="InParanoid" id="Q3AD54"/>
<dbReference type="OrthoDB" id="9801867at2"/>
<dbReference type="UniPathway" id="UPA00031">
    <property type="reaction ID" value="UER00006"/>
</dbReference>
<dbReference type="Proteomes" id="UP000002706">
    <property type="component" value="Chromosome"/>
</dbReference>
<dbReference type="GO" id="GO:0005737">
    <property type="term" value="C:cytoplasm"/>
    <property type="evidence" value="ECO:0007669"/>
    <property type="project" value="UniProtKB-SubCell"/>
</dbReference>
<dbReference type="GO" id="GO:0005524">
    <property type="term" value="F:ATP binding"/>
    <property type="evidence" value="ECO:0007669"/>
    <property type="project" value="UniProtKB-KW"/>
</dbReference>
<dbReference type="GO" id="GO:0003879">
    <property type="term" value="F:ATP phosphoribosyltransferase activity"/>
    <property type="evidence" value="ECO:0007669"/>
    <property type="project" value="UniProtKB-UniRule"/>
</dbReference>
<dbReference type="GO" id="GO:0000105">
    <property type="term" value="P:L-histidine biosynthetic process"/>
    <property type="evidence" value="ECO:0007669"/>
    <property type="project" value="UniProtKB-UniRule"/>
</dbReference>
<dbReference type="CDD" id="cd13595">
    <property type="entry name" value="PBP2_HisGs"/>
    <property type="match status" value="1"/>
</dbReference>
<dbReference type="FunFam" id="3.40.190.10:FF:000008">
    <property type="entry name" value="ATP phosphoribosyltransferase"/>
    <property type="match status" value="1"/>
</dbReference>
<dbReference type="Gene3D" id="3.40.190.10">
    <property type="entry name" value="Periplasmic binding protein-like II"/>
    <property type="match status" value="2"/>
</dbReference>
<dbReference type="HAMAP" id="MF_01018">
    <property type="entry name" value="HisG_Short"/>
    <property type="match status" value="1"/>
</dbReference>
<dbReference type="InterPro" id="IPR013820">
    <property type="entry name" value="ATP_PRibTrfase_cat"/>
</dbReference>
<dbReference type="InterPro" id="IPR018198">
    <property type="entry name" value="ATP_PRibTrfase_CS"/>
</dbReference>
<dbReference type="InterPro" id="IPR001348">
    <property type="entry name" value="ATP_PRibTrfase_HisG"/>
</dbReference>
<dbReference type="InterPro" id="IPR024893">
    <property type="entry name" value="ATP_PRibTrfase_HisG_short"/>
</dbReference>
<dbReference type="NCBIfam" id="TIGR00070">
    <property type="entry name" value="hisG"/>
    <property type="match status" value="1"/>
</dbReference>
<dbReference type="PANTHER" id="PTHR21403:SF8">
    <property type="entry name" value="ATP PHOSPHORIBOSYLTRANSFERASE"/>
    <property type="match status" value="1"/>
</dbReference>
<dbReference type="PANTHER" id="PTHR21403">
    <property type="entry name" value="ATP PHOSPHORIBOSYLTRANSFERASE ATP-PRTASE"/>
    <property type="match status" value="1"/>
</dbReference>
<dbReference type="Pfam" id="PF01634">
    <property type="entry name" value="HisG"/>
    <property type="match status" value="1"/>
</dbReference>
<dbReference type="SUPFAM" id="SSF53850">
    <property type="entry name" value="Periplasmic binding protein-like II"/>
    <property type="match status" value="1"/>
</dbReference>
<dbReference type="PROSITE" id="PS01316">
    <property type="entry name" value="ATP_P_PHORIBOSYLTR"/>
    <property type="match status" value="1"/>
</dbReference>
<keyword id="KW-0028">Amino-acid biosynthesis</keyword>
<keyword id="KW-0067">ATP-binding</keyword>
<keyword id="KW-0963">Cytoplasm</keyword>
<keyword id="KW-0328">Glycosyltransferase</keyword>
<keyword id="KW-0368">Histidine biosynthesis</keyword>
<keyword id="KW-0547">Nucleotide-binding</keyword>
<keyword id="KW-1185">Reference proteome</keyword>
<keyword id="KW-0808">Transferase</keyword>
<gene>
    <name evidence="1" type="primary">hisG</name>
    <name type="ordered locus">CHY_1084</name>
</gene>
<organism>
    <name type="scientific">Carboxydothermus hydrogenoformans (strain ATCC BAA-161 / DSM 6008 / Z-2901)</name>
    <dbReference type="NCBI Taxonomy" id="246194"/>
    <lineage>
        <taxon>Bacteria</taxon>
        <taxon>Bacillati</taxon>
        <taxon>Bacillota</taxon>
        <taxon>Clostridia</taxon>
        <taxon>Thermoanaerobacterales</taxon>
        <taxon>Thermoanaerobacteraceae</taxon>
        <taxon>Carboxydothermus</taxon>
    </lineage>
</organism>
<reference key="1">
    <citation type="journal article" date="2005" name="PLoS Genet.">
        <title>Life in hot carbon monoxide: the complete genome sequence of Carboxydothermus hydrogenoformans Z-2901.</title>
        <authorList>
            <person name="Wu M."/>
            <person name="Ren Q."/>
            <person name="Durkin A.S."/>
            <person name="Daugherty S.C."/>
            <person name="Brinkac L.M."/>
            <person name="Dodson R.J."/>
            <person name="Madupu R."/>
            <person name="Sullivan S.A."/>
            <person name="Kolonay J.F."/>
            <person name="Nelson W.C."/>
            <person name="Tallon L.J."/>
            <person name="Jones K.M."/>
            <person name="Ulrich L.E."/>
            <person name="Gonzalez J.M."/>
            <person name="Zhulin I.B."/>
            <person name="Robb F.T."/>
            <person name="Eisen J.A."/>
        </authorList>
    </citation>
    <scope>NUCLEOTIDE SEQUENCE [LARGE SCALE GENOMIC DNA]</scope>
    <source>
        <strain>ATCC BAA-161 / DSM 6008 / Z-2901</strain>
    </source>
</reference>
<name>HIS1_CARHZ</name>
<feature type="chain" id="PRO_0000229313" description="ATP phosphoribosyltransferase">
    <location>
        <begin position="1"/>
        <end position="221"/>
    </location>
</feature>
<protein>
    <recommendedName>
        <fullName evidence="1">ATP phosphoribosyltransferase</fullName>
        <shortName evidence="1">ATP-PRT</shortName>
        <shortName evidence="1">ATP-PRTase</shortName>
        <ecNumber evidence="1">2.4.2.17</ecNumber>
    </recommendedName>
</protein>
<sequence length="221" mass="24764">MKNGLTFALPKGTLFPDTVRLLYKAGFLKKEEVLLESRKLVIKDGPYTFIICRPTDIPTFVEHGAADLGIVGKDVIEEQRREIFELLDLKYGKCHFAVAAPRDNPKVHDLGKLTEVRAASKFPEVTRRFFKGLGVRAEVIKMHGNVELAPLVGLADVIVDLVSTGRTLRENNLIEITKIMDITARLVANRVAARVYDREIKAIVKKFKNLVGGEKNEVNLK</sequence>
<evidence type="ECO:0000255" key="1">
    <source>
        <dbReference type="HAMAP-Rule" id="MF_01018"/>
    </source>
</evidence>
<proteinExistence type="inferred from homology"/>
<comment type="function">
    <text evidence="1">Catalyzes the condensation of ATP and 5-phosphoribose 1-diphosphate to form N'-(5'-phosphoribosyl)-ATP (PR-ATP). Has a crucial role in the pathway because the rate of histidine biosynthesis seems to be controlled primarily by regulation of HisG enzymatic activity.</text>
</comment>
<comment type="catalytic activity">
    <reaction evidence="1">
        <text>1-(5-phospho-beta-D-ribosyl)-ATP + diphosphate = 5-phospho-alpha-D-ribose 1-diphosphate + ATP</text>
        <dbReference type="Rhea" id="RHEA:18473"/>
        <dbReference type="ChEBI" id="CHEBI:30616"/>
        <dbReference type="ChEBI" id="CHEBI:33019"/>
        <dbReference type="ChEBI" id="CHEBI:58017"/>
        <dbReference type="ChEBI" id="CHEBI:73183"/>
        <dbReference type="EC" id="2.4.2.17"/>
    </reaction>
</comment>
<comment type="pathway">
    <text evidence="1">Amino-acid biosynthesis; L-histidine biosynthesis; L-histidine from 5-phospho-alpha-D-ribose 1-diphosphate: step 1/9.</text>
</comment>
<comment type="subunit">
    <text evidence="1">Heteromultimer composed of HisG and HisZ subunits.</text>
</comment>
<comment type="subcellular location">
    <subcellularLocation>
        <location evidence="1">Cytoplasm</location>
    </subcellularLocation>
</comment>
<comment type="domain">
    <text>Lacks the C-terminal regulatory region which is replaced by HisZ.</text>
</comment>
<comment type="similarity">
    <text evidence="1">Belongs to the ATP phosphoribosyltransferase family. Short subfamily.</text>
</comment>
<accession>Q3AD54</accession>